<gene>
    <name evidence="1" type="primary">rsmH</name>
    <name type="synonym">mraW</name>
    <name type="ordered locus">BDI_2494</name>
</gene>
<sequence length="305" mass="34876">MEEKDSCYHVPVMLRESLEGLDIRPDGIYVDVTFGGGGHSREILKRLGSEGELYGFDQDADAEHNVPADPRFTFVRSNFRYLYNFMRYYGESGEVDGLLADLGVSSHHFDDKDRGFSFRFDGTLDMRMNTRAGQTAADIVNNYTAEALADVFYLYGELKVSRKLASVLVKARETKKIETIGDFLEVIKPFTGKDKEKKFLAQVFQALRIEVNDEMRALKEMLRSTLRVLRPGGRLVVITYHSLEDRLVKNFLKTGNFEGKCEQDFFGNVRSPFRLVNNKVIVPTDEEVERNPRSRSAKLRIAEKV</sequence>
<evidence type="ECO:0000255" key="1">
    <source>
        <dbReference type="HAMAP-Rule" id="MF_01007"/>
    </source>
</evidence>
<accession>A6LEV0</accession>
<feature type="chain" id="PRO_1000062831" description="Ribosomal RNA small subunit methyltransferase H">
    <location>
        <begin position="1"/>
        <end position="305"/>
    </location>
</feature>
<feature type="binding site" evidence="1">
    <location>
        <begin position="37"/>
        <end position="39"/>
    </location>
    <ligand>
        <name>S-adenosyl-L-methionine</name>
        <dbReference type="ChEBI" id="CHEBI:59789"/>
    </ligand>
</feature>
<feature type="binding site" evidence="1">
    <location>
        <position position="57"/>
    </location>
    <ligand>
        <name>S-adenosyl-L-methionine</name>
        <dbReference type="ChEBI" id="CHEBI:59789"/>
    </ligand>
</feature>
<feature type="binding site" evidence="1">
    <location>
        <position position="85"/>
    </location>
    <ligand>
        <name>S-adenosyl-L-methionine</name>
        <dbReference type="ChEBI" id="CHEBI:59789"/>
    </ligand>
</feature>
<feature type="binding site" evidence="1">
    <location>
        <position position="101"/>
    </location>
    <ligand>
        <name>S-adenosyl-L-methionine</name>
        <dbReference type="ChEBI" id="CHEBI:59789"/>
    </ligand>
</feature>
<feature type="binding site" evidence="1">
    <location>
        <position position="108"/>
    </location>
    <ligand>
        <name>S-adenosyl-L-methionine</name>
        <dbReference type="ChEBI" id="CHEBI:59789"/>
    </ligand>
</feature>
<organism>
    <name type="scientific">Parabacteroides distasonis (strain ATCC 8503 / DSM 20701 / CIP 104284 / JCM 5825 / NCTC 11152)</name>
    <dbReference type="NCBI Taxonomy" id="435591"/>
    <lineage>
        <taxon>Bacteria</taxon>
        <taxon>Pseudomonadati</taxon>
        <taxon>Bacteroidota</taxon>
        <taxon>Bacteroidia</taxon>
        <taxon>Bacteroidales</taxon>
        <taxon>Tannerellaceae</taxon>
        <taxon>Parabacteroides</taxon>
    </lineage>
</organism>
<dbReference type="EC" id="2.1.1.199" evidence="1"/>
<dbReference type="EMBL" id="CP000140">
    <property type="protein sequence ID" value="ABR44214.1"/>
    <property type="molecule type" value="Genomic_DNA"/>
</dbReference>
<dbReference type="RefSeq" id="WP_005861358.1">
    <property type="nucleotide sequence ID" value="NZ_LR215978.1"/>
</dbReference>
<dbReference type="SMR" id="A6LEV0"/>
<dbReference type="STRING" id="435591.BDI_2494"/>
<dbReference type="PaxDb" id="435591-BDI_2494"/>
<dbReference type="KEGG" id="pdi:BDI_2494"/>
<dbReference type="eggNOG" id="COG0275">
    <property type="taxonomic scope" value="Bacteria"/>
</dbReference>
<dbReference type="HOGENOM" id="CLU_038422_2_0_10"/>
<dbReference type="BioCyc" id="PDIS435591:G1G5A-2563-MONOMER"/>
<dbReference type="Proteomes" id="UP000000566">
    <property type="component" value="Chromosome"/>
</dbReference>
<dbReference type="GO" id="GO:0005737">
    <property type="term" value="C:cytoplasm"/>
    <property type="evidence" value="ECO:0007669"/>
    <property type="project" value="UniProtKB-SubCell"/>
</dbReference>
<dbReference type="GO" id="GO:0071424">
    <property type="term" value="F:rRNA (cytosine-N4-)-methyltransferase activity"/>
    <property type="evidence" value="ECO:0007669"/>
    <property type="project" value="UniProtKB-UniRule"/>
</dbReference>
<dbReference type="GO" id="GO:0070475">
    <property type="term" value="P:rRNA base methylation"/>
    <property type="evidence" value="ECO:0007669"/>
    <property type="project" value="UniProtKB-UniRule"/>
</dbReference>
<dbReference type="FunFam" id="1.10.150.170:FF:000003">
    <property type="entry name" value="Ribosomal RNA small subunit methyltransferase H"/>
    <property type="match status" value="1"/>
</dbReference>
<dbReference type="Gene3D" id="1.10.150.170">
    <property type="entry name" value="Putative methyltransferase TM0872, insert domain"/>
    <property type="match status" value="1"/>
</dbReference>
<dbReference type="Gene3D" id="3.40.50.150">
    <property type="entry name" value="Vaccinia Virus protein VP39"/>
    <property type="match status" value="1"/>
</dbReference>
<dbReference type="HAMAP" id="MF_01007">
    <property type="entry name" value="16SrRNA_methyltr_H"/>
    <property type="match status" value="1"/>
</dbReference>
<dbReference type="InterPro" id="IPR002903">
    <property type="entry name" value="RsmH"/>
</dbReference>
<dbReference type="InterPro" id="IPR023397">
    <property type="entry name" value="SAM-dep_MeTrfase_MraW_recog"/>
</dbReference>
<dbReference type="InterPro" id="IPR029063">
    <property type="entry name" value="SAM-dependent_MTases_sf"/>
</dbReference>
<dbReference type="NCBIfam" id="TIGR00006">
    <property type="entry name" value="16S rRNA (cytosine(1402)-N(4))-methyltransferase RsmH"/>
    <property type="match status" value="1"/>
</dbReference>
<dbReference type="PANTHER" id="PTHR11265:SF0">
    <property type="entry name" value="12S RRNA N4-METHYLCYTIDINE METHYLTRANSFERASE"/>
    <property type="match status" value="1"/>
</dbReference>
<dbReference type="PANTHER" id="PTHR11265">
    <property type="entry name" value="S-ADENOSYL-METHYLTRANSFERASE MRAW"/>
    <property type="match status" value="1"/>
</dbReference>
<dbReference type="Pfam" id="PF01795">
    <property type="entry name" value="Methyltransf_5"/>
    <property type="match status" value="1"/>
</dbReference>
<dbReference type="PIRSF" id="PIRSF004486">
    <property type="entry name" value="MraW"/>
    <property type="match status" value="1"/>
</dbReference>
<dbReference type="SUPFAM" id="SSF81799">
    <property type="entry name" value="Putative methyltransferase TM0872, insert domain"/>
    <property type="match status" value="1"/>
</dbReference>
<dbReference type="SUPFAM" id="SSF53335">
    <property type="entry name" value="S-adenosyl-L-methionine-dependent methyltransferases"/>
    <property type="match status" value="1"/>
</dbReference>
<protein>
    <recommendedName>
        <fullName evidence="1">Ribosomal RNA small subunit methyltransferase H</fullName>
        <ecNumber evidence="1">2.1.1.199</ecNumber>
    </recommendedName>
    <alternativeName>
        <fullName evidence="1">16S rRNA m(4)C1402 methyltransferase</fullName>
    </alternativeName>
    <alternativeName>
        <fullName evidence="1">rRNA (cytosine-N(4)-)-methyltransferase RsmH</fullName>
    </alternativeName>
</protein>
<comment type="function">
    <text evidence="1">Specifically methylates the N4 position of cytidine in position 1402 (C1402) of 16S rRNA.</text>
</comment>
<comment type="catalytic activity">
    <reaction evidence="1">
        <text>cytidine(1402) in 16S rRNA + S-adenosyl-L-methionine = N(4)-methylcytidine(1402) in 16S rRNA + S-adenosyl-L-homocysteine + H(+)</text>
        <dbReference type="Rhea" id="RHEA:42928"/>
        <dbReference type="Rhea" id="RHEA-COMP:10286"/>
        <dbReference type="Rhea" id="RHEA-COMP:10287"/>
        <dbReference type="ChEBI" id="CHEBI:15378"/>
        <dbReference type="ChEBI" id="CHEBI:57856"/>
        <dbReference type="ChEBI" id="CHEBI:59789"/>
        <dbReference type="ChEBI" id="CHEBI:74506"/>
        <dbReference type="ChEBI" id="CHEBI:82748"/>
        <dbReference type="EC" id="2.1.1.199"/>
    </reaction>
</comment>
<comment type="subcellular location">
    <subcellularLocation>
        <location evidence="1">Cytoplasm</location>
    </subcellularLocation>
</comment>
<comment type="similarity">
    <text evidence="1">Belongs to the methyltransferase superfamily. RsmH family.</text>
</comment>
<reference key="1">
    <citation type="journal article" date="2007" name="PLoS Biol.">
        <title>Evolution of symbiotic bacteria in the distal human intestine.</title>
        <authorList>
            <person name="Xu J."/>
            <person name="Mahowald M.A."/>
            <person name="Ley R.E."/>
            <person name="Lozupone C.A."/>
            <person name="Hamady M."/>
            <person name="Martens E.C."/>
            <person name="Henrissat B."/>
            <person name="Coutinho P.M."/>
            <person name="Minx P."/>
            <person name="Latreille P."/>
            <person name="Cordum H."/>
            <person name="Van Brunt A."/>
            <person name="Kim K."/>
            <person name="Fulton R.S."/>
            <person name="Fulton L.A."/>
            <person name="Clifton S.W."/>
            <person name="Wilson R.K."/>
            <person name="Knight R.D."/>
            <person name="Gordon J.I."/>
        </authorList>
    </citation>
    <scope>NUCLEOTIDE SEQUENCE [LARGE SCALE GENOMIC DNA]</scope>
    <source>
        <strain>ATCC 8503 / DSM 20701 / CIP 104284 / JCM 5825 / NCTC 11152</strain>
    </source>
</reference>
<proteinExistence type="inferred from homology"/>
<keyword id="KW-0963">Cytoplasm</keyword>
<keyword id="KW-0489">Methyltransferase</keyword>
<keyword id="KW-1185">Reference proteome</keyword>
<keyword id="KW-0698">rRNA processing</keyword>
<keyword id="KW-0949">S-adenosyl-L-methionine</keyword>
<keyword id="KW-0808">Transferase</keyword>
<name>RSMH_PARD8</name>